<protein>
    <recommendedName>
        <fullName evidence="1">Large ribosomal subunit protein uL10</fullName>
    </recommendedName>
    <alternativeName>
        <fullName>50S ribosomal protein L10</fullName>
    </alternativeName>
    <alternativeName>
        <fullName evidence="1">Acidic ribosomal protein P0 homolog</fullName>
    </alternativeName>
</protein>
<reference key="1">
    <citation type="journal article" date="1999" name="Genetics">
        <title>Divergence of the hyperthermophilic archaea Pyrococcus furiosus and P. horikoshii inferred from complete genomic sequences.</title>
        <authorList>
            <person name="Maeder D.L."/>
            <person name="Weiss R.B."/>
            <person name="Dunn D.M."/>
            <person name="Cherry J.L."/>
            <person name="Gonzalez J.M."/>
            <person name="DiRuggiero J."/>
            <person name="Robb F.T."/>
        </authorList>
    </citation>
    <scope>NUCLEOTIDE SEQUENCE [LARGE SCALE GENOMIC DNA]</scope>
    <source>
        <strain>ATCC 43587 / DSM 3638 / JCM 8422 / Vc1</strain>
    </source>
</reference>
<reference evidence="4" key="2">
    <citation type="journal article" date="2013" name="Nucleic Acids Res.">
        <title>Promiscuous behaviour of archaeal ribosomal proteins: implications for eukaryotic ribosome evolution.</title>
        <authorList>
            <person name="Armache J.P."/>
            <person name="Anger A.M."/>
            <person name="Marquez V."/>
            <person name="Franckenberg S."/>
            <person name="Frohlich T."/>
            <person name="Villa E."/>
            <person name="Berninghausen O."/>
            <person name="Thomm M."/>
            <person name="Arnold G.J."/>
            <person name="Beckmann R."/>
            <person name="Wilson D.N."/>
        </authorList>
    </citation>
    <scope>STRUCTURE BY ELECTRON MICROSCOPY (6.60 ANGSTROMS) IN THE 70S RIBOSOME</scope>
    <scope>SUBUNIT</scope>
</reference>
<accession>Q8TZJ8</accession>
<gene>
    <name evidence="1" type="primary">rpl10</name>
    <name evidence="1" type="synonym">rplP0</name>
    <name type="ordered locus">PF1993</name>
</gene>
<keyword id="KW-0002">3D-structure</keyword>
<keyword id="KW-1185">Reference proteome</keyword>
<keyword id="KW-0687">Ribonucleoprotein</keyword>
<keyword id="KW-0689">Ribosomal protein</keyword>
<keyword id="KW-0694">RNA-binding</keyword>
<keyword id="KW-0699">rRNA-binding</keyword>
<evidence type="ECO:0000255" key="1">
    <source>
        <dbReference type="HAMAP-Rule" id="MF_00280"/>
    </source>
</evidence>
<evidence type="ECO:0000256" key="2">
    <source>
        <dbReference type="SAM" id="MobiDB-lite"/>
    </source>
</evidence>
<evidence type="ECO:0000269" key="3">
    <source>
    </source>
</evidence>
<evidence type="ECO:0007744" key="4">
    <source>
        <dbReference type="PDB" id="4V6U"/>
    </source>
</evidence>
<dbReference type="EMBL" id="AE009950">
    <property type="protein sequence ID" value="AAL82117.1"/>
    <property type="molecule type" value="Genomic_DNA"/>
</dbReference>
<dbReference type="RefSeq" id="WP_011013137.1">
    <property type="nucleotide sequence ID" value="NZ_CP023154.1"/>
</dbReference>
<dbReference type="PDB" id="4V6U">
    <property type="method" value="EM"/>
    <property type="resolution" value="6.60 A"/>
    <property type="chains" value="Bk=1-339"/>
</dbReference>
<dbReference type="PDBsum" id="4V6U"/>
<dbReference type="SMR" id="Q8TZJ8"/>
<dbReference type="STRING" id="186497.PF1993"/>
<dbReference type="PaxDb" id="186497-PF1993"/>
<dbReference type="KEGG" id="pfu:PF1993"/>
<dbReference type="PATRIC" id="fig|186497.12.peg.2069"/>
<dbReference type="eggNOG" id="arCOG04288">
    <property type="taxonomic scope" value="Archaea"/>
</dbReference>
<dbReference type="HOGENOM" id="CLU_053173_0_0_2"/>
<dbReference type="OrthoDB" id="30930at2157"/>
<dbReference type="PhylomeDB" id="Q8TZJ8"/>
<dbReference type="Proteomes" id="UP000001013">
    <property type="component" value="Chromosome"/>
</dbReference>
<dbReference type="GO" id="GO:0022625">
    <property type="term" value="C:cytosolic large ribosomal subunit"/>
    <property type="evidence" value="ECO:0007669"/>
    <property type="project" value="TreeGrafter"/>
</dbReference>
<dbReference type="GO" id="GO:0070180">
    <property type="term" value="F:large ribosomal subunit rRNA binding"/>
    <property type="evidence" value="ECO:0007669"/>
    <property type="project" value="UniProtKB-UniRule"/>
</dbReference>
<dbReference type="GO" id="GO:0003735">
    <property type="term" value="F:structural constituent of ribosome"/>
    <property type="evidence" value="ECO:0007669"/>
    <property type="project" value="TreeGrafter"/>
</dbReference>
<dbReference type="GO" id="GO:0002181">
    <property type="term" value="P:cytoplasmic translation"/>
    <property type="evidence" value="ECO:0007669"/>
    <property type="project" value="TreeGrafter"/>
</dbReference>
<dbReference type="GO" id="GO:0000027">
    <property type="term" value="P:ribosomal large subunit assembly"/>
    <property type="evidence" value="ECO:0007669"/>
    <property type="project" value="TreeGrafter"/>
</dbReference>
<dbReference type="CDD" id="cd05795">
    <property type="entry name" value="Ribosomal_P0_L10e"/>
    <property type="match status" value="1"/>
</dbReference>
<dbReference type="FunFam" id="3.90.105.20:FF:000001">
    <property type="entry name" value="60S acidic ribosomal protein P0"/>
    <property type="match status" value="1"/>
</dbReference>
<dbReference type="Gene3D" id="3.30.70.1730">
    <property type="match status" value="1"/>
</dbReference>
<dbReference type="Gene3D" id="3.90.105.20">
    <property type="match status" value="1"/>
</dbReference>
<dbReference type="Gene3D" id="6.10.140.760">
    <property type="match status" value="1"/>
</dbReference>
<dbReference type="HAMAP" id="MF_00280">
    <property type="entry name" value="Ribosomal_uL10_arch"/>
    <property type="match status" value="1"/>
</dbReference>
<dbReference type="InterPro" id="IPR050323">
    <property type="entry name" value="Ribosomal_protein_uL10"/>
</dbReference>
<dbReference type="InterPro" id="IPR001790">
    <property type="entry name" value="Ribosomal_uL10"/>
</dbReference>
<dbReference type="InterPro" id="IPR040637">
    <property type="entry name" value="Ribosomal_uL10-like_insert"/>
</dbReference>
<dbReference type="InterPro" id="IPR043164">
    <property type="entry name" value="Ribosomal_uL10-like_insert_sf"/>
</dbReference>
<dbReference type="InterPro" id="IPR043141">
    <property type="entry name" value="Ribosomal_uL10-like_sf"/>
</dbReference>
<dbReference type="InterPro" id="IPR022909">
    <property type="entry name" value="Ribosomal_uL10_arc"/>
</dbReference>
<dbReference type="NCBIfam" id="NF003096">
    <property type="entry name" value="PRK04019.1-2"/>
    <property type="match status" value="1"/>
</dbReference>
<dbReference type="NCBIfam" id="NF003098">
    <property type="entry name" value="PRK04019.1-5"/>
    <property type="match status" value="1"/>
</dbReference>
<dbReference type="PANTHER" id="PTHR45699">
    <property type="entry name" value="60S ACIDIC RIBOSOMAL PROTEIN P0"/>
    <property type="match status" value="1"/>
</dbReference>
<dbReference type="PANTHER" id="PTHR45699:SF3">
    <property type="entry name" value="LARGE RIBOSOMAL SUBUNIT PROTEIN UL10"/>
    <property type="match status" value="1"/>
</dbReference>
<dbReference type="Pfam" id="PF00466">
    <property type="entry name" value="Ribosomal_L10"/>
    <property type="match status" value="1"/>
</dbReference>
<dbReference type="Pfam" id="PF17777">
    <property type="entry name" value="RL10P_insert"/>
    <property type="match status" value="1"/>
</dbReference>
<dbReference type="SUPFAM" id="SSF160369">
    <property type="entry name" value="Ribosomal protein L10-like"/>
    <property type="match status" value="1"/>
</dbReference>
<comment type="function">
    <text evidence="1">Forms part of the ribosomal stalk, playing a central role in the interaction of the ribosome with GTP-bound translation factors.</text>
</comment>
<comment type="subunit">
    <text evidence="1 3">Part of the 50S ribosomal subunit (PubMed:23222135). Forms part of the ribosomal stalk which helps the ribosome interact with GTP-bound translation factors. Forms a heptameric L10(L12)2(L12)2(L12)2 complex, where L10 forms an elongated spine to which the L12 dimers bind in a sequential fashion.</text>
</comment>
<comment type="similarity">
    <text evidence="1">Belongs to the universal ribosomal protein uL10 family.</text>
</comment>
<sequence length="339" mass="37129">MAHVAEWKKKEVEELANLIKSYPVVALVDVSSMPAYPLSQMRRLIRENNGLLRVSRNTLIELAIKKVAQELGKPELEKLINYIEGGAGILVTTMNPFKLYKFLQQNRQPAPAKPGAKVPKDVVIPAGPTSLAPGPIVGQMQAMGIPARIERGKVTIQKDTVVLKAGEEITPELANILNALGIQPLEVGLDLLAVYEDGIIYTPDVLAIDESEYINMLQKAYMHAFNLAVNIAYPTPQTIEAIIQKAFLNAKAVAVEAGYITKETISDIIGRAIRAMLLLAQQLPEDVLDEKTKELLSAQAQVSVAQVEEEKKEEKVEEEKEDEEASEEEALAGLSALFG</sequence>
<feature type="chain" id="PRO_0000154803" description="Large ribosomal subunit protein uL10">
    <location>
        <begin position="1"/>
        <end position="339"/>
    </location>
</feature>
<feature type="region of interest" description="Disordered" evidence="2">
    <location>
        <begin position="307"/>
        <end position="339"/>
    </location>
</feature>
<feature type="compositionally biased region" description="Basic and acidic residues" evidence="2">
    <location>
        <begin position="308"/>
        <end position="318"/>
    </location>
</feature>
<feature type="compositionally biased region" description="Acidic residues" evidence="2">
    <location>
        <begin position="319"/>
        <end position="330"/>
    </location>
</feature>
<proteinExistence type="evidence at protein level"/>
<organism>
    <name type="scientific">Pyrococcus furiosus (strain ATCC 43587 / DSM 3638 / JCM 8422 / Vc1)</name>
    <dbReference type="NCBI Taxonomy" id="186497"/>
    <lineage>
        <taxon>Archaea</taxon>
        <taxon>Methanobacteriati</taxon>
        <taxon>Methanobacteriota</taxon>
        <taxon>Thermococci</taxon>
        <taxon>Thermococcales</taxon>
        <taxon>Thermococcaceae</taxon>
        <taxon>Pyrococcus</taxon>
    </lineage>
</organism>
<name>RL10_PYRFU</name>